<reference key="1">
    <citation type="journal article" date="2003" name="Nature">
        <title>The DNA sequence and analysis of human chromosome 14.</title>
        <authorList>
            <person name="Heilig R."/>
            <person name="Eckenberg R."/>
            <person name="Petit J.-L."/>
            <person name="Fonknechten N."/>
            <person name="Da Silva C."/>
            <person name="Cattolico L."/>
            <person name="Levy M."/>
            <person name="Barbe V."/>
            <person name="De Berardinis V."/>
            <person name="Ureta-Vidal A."/>
            <person name="Pelletier E."/>
            <person name="Vico V."/>
            <person name="Anthouard V."/>
            <person name="Rowen L."/>
            <person name="Madan A."/>
            <person name="Qin S."/>
            <person name="Sun H."/>
            <person name="Du H."/>
            <person name="Pepin K."/>
            <person name="Artiguenave F."/>
            <person name="Robert C."/>
            <person name="Cruaud C."/>
            <person name="Bruels T."/>
            <person name="Jaillon O."/>
            <person name="Friedlander L."/>
            <person name="Samson G."/>
            <person name="Brottier P."/>
            <person name="Cure S."/>
            <person name="Segurens B."/>
            <person name="Aniere F."/>
            <person name="Samain S."/>
            <person name="Crespeau H."/>
            <person name="Abbasi N."/>
            <person name="Aiach N."/>
            <person name="Boscus D."/>
            <person name="Dickhoff R."/>
            <person name="Dors M."/>
            <person name="Dubois I."/>
            <person name="Friedman C."/>
            <person name="Gouyvenoux M."/>
            <person name="James R."/>
            <person name="Madan A."/>
            <person name="Mairey-Estrada B."/>
            <person name="Mangenot S."/>
            <person name="Martins N."/>
            <person name="Menard M."/>
            <person name="Oztas S."/>
            <person name="Ratcliffe A."/>
            <person name="Shaffer T."/>
            <person name="Trask B."/>
            <person name="Vacherie B."/>
            <person name="Bellemere C."/>
            <person name="Belser C."/>
            <person name="Besnard-Gonnet M."/>
            <person name="Bartol-Mavel D."/>
            <person name="Boutard M."/>
            <person name="Briez-Silla S."/>
            <person name="Combette S."/>
            <person name="Dufosse-Laurent V."/>
            <person name="Ferron C."/>
            <person name="Lechaplais C."/>
            <person name="Louesse C."/>
            <person name="Muselet D."/>
            <person name="Magdelenat G."/>
            <person name="Pateau E."/>
            <person name="Petit E."/>
            <person name="Sirvain-Trukniewicz P."/>
            <person name="Trybou A."/>
            <person name="Vega-Czarny N."/>
            <person name="Bataille E."/>
            <person name="Bluet E."/>
            <person name="Bordelais I."/>
            <person name="Dubois M."/>
            <person name="Dumont C."/>
            <person name="Guerin T."/>
            <person name="Haffray S."/>
            <person name="Hammadi R."/>
            <person name="Muanga J."/>
            <person name="Pellouin V."/>
            <person name="Robert D."/>
            <person name="Wunderle E."/>
            <person name="Gauguet G."/>
            <person name="Roy A."/>
            <person name="Sainte-Marthe L."/>
            <person name="Verdier J."/>
            <person name="Verdier-Discala C."/>
            <person name="Hillier L.W."/>
            <person name="Fulton L."/>
            <person name="McPherson J."/>
            <person name="Matsuda F."/>
            <person name="Wilson R."/>
            <person name="Scarpelli C."/>
            <person name="Gyapay G."/>
            <person name="Wincker P."/>
            <person name="Saurin W."/>
            <person name="Quetier F."/>
            <person name="Waterston R."/>
            <person name="Hood L."/>
            <person name="Weissenbach J."/>
        </authorList>
    </citation>
    <scope>NUCLEOTIDE SEQUENCE [LARGE SCALE GENOMIC DNA] (IMGT ALLELE IGHV3-21*01)</scope>
</reference>
<reference key="2">
    <citation type="journal article" date="2001" name="Exp. Clin. Immunogenet.">
        <title>Nomenclature of the human immunoglobulin heavy (IGH) genes.</title>
        <authorList>
            <person name="Lefranc M.P."/>
        </authorList>
    </citation>
    <scope>NOMENCLATURE</scope>
</reference>
<reference key="3">
    <citation type="book" date="2001" name="The Immunoglobulin FactsBook.">
        <title>The Immunoglobulin FactsBook.</title>
        <editorList>
            <person name="Lefranc M.P."/>
            <person name="Lefranc G."/>
        </editorList>
        <authorList>
            <person name="Lefranc M.P."/>
            <person name="Lefranc G."/>
        </authorList>
    </citation>
    <scope>NOMENCLATURE</scope>
</reference>
<reference key="4">
    <citation type="journal article" date="2007" name="Annu. Rev. Genet.">
        <title>Immunoglobulin somatic hypermutation.</title>
        <authorList>
            <person name="Teng G."/>
            <person name="Papavasiliou F.N."/>
        </authorList>
    </citation>
    <scope>REVIEW ON SOMATIC HYPERMUTATION</scope>
</reference>
<reference key="5">
    <citation type="journal article" date="2010" name="J. Allergy Clin. Immunol.">
        <title>Structure and function of immunoglobulins.</title>
        <authorList>
            <person name="Schroeder H.W. Jr."/>
            <person name="Cavacini L."/>
        </authorList>
    </citation>
    <scope>REVIEW ON IMMUNOGLOBULINS</scope>
</reference>
<reference key="6">
    <citation type="journal article" date="2012" name="Nat. Rev. Immunol.">
        <title>Molecular programming of B cell memory.</title>
        <authorList>
            <person name="McHeyzer-Williams M."/>
            <person name="Okitsu S."/>
            <person name="Wang N."/>
            <person name="McHeyzer-Williams L."/>
        </authorList>
    </citation>
    <scope>REVIEW ON FUNCTION</scope>
</reference>
<reference key="7">
    <citation type="journal article" date="2014" name="Front. Immunol.">
        <title>Immunoglobulin and T Cell Receptor Genes: IMGT((R)) and the Birth and Rise of Immunoinformatics.</title>
        <authorList>
            <person name="Lefranc M.P."/>
        </authorList>
    </citation>
    <scope>NOMENCLATURE</scope>
</reference>
<feature type="signal peptide" evidence="2">
    <location>
        <begin position="1"/>
        <end position="19"/>
    </location>
</feature>
<feature type="chain" id="PRO_5007390968" description="Immunoglobulin heavy variable 3-21" evidence="2">
    <location>
        <begin position="20"/>
        <end position="117"/>
    </location>
</feature>
<feature type="domain" description="Ig-like" evidence="3">
    <location>
        <begin position="20"/>
        <end position="117" status="greater than"/>
    </location>
</feature>
<feature type="region of interest" description="Framework-1" evidence="1">
    <location>
        <begin position="20"/>
        <end position="44"/>
    </location>
</feature>
<feature type="region of interest" description="Complementarity-determining-1" evidence="1">
    <location>
        <begin position="45"/>
        <end position="52"/>
    </location>
</feature>
<feature type="region of interest" description="Framework-2" evidence="1">
    <location>
        <begin position="53"/>
        <end position="69"/>
    </location>
</feature>
<feature type="region of interest" description="Complementarity-determining-2" evidence="1">
    <location>
        <begin position="70"/>
        <end position="77"/>
    </location>
</feature>
<feature type="region of interest" description="Framework-3" evidence="1">
    <location>
        <begin position="78"/>
        <end position="115"/>
    </location>
</feature>
<feature type="region of interest" description="Complementarity-determining-3" evidence="1">
    <location>
        <begin position="116"/>
        <end position="117" status="greater than"/>
    </location>
</feature>
<feature type="disulfide bond" evidence="3">
    <location>
        <begin position="41"/>
        <end position="115"/>
    </location>
</feature>
<feature type="non-terminal residue">
    <location>
        <position position="117"/>
    </location>
</feature>
<organism>
    <name type="scientific">Homo sapiens</name>
    <name type="common">Human</name>
    <dbReference type="NCBI Taxonomy" id="9606"/>
    <lineage>
        <taxon>Eukaryota</taxon>
        <taxon>Metazoa</taxon>
        <taxon>Chordata</taxon>
        <taxon>Craniata</taxon>
        <taxon>Vertebrata</taxon>
        <taxon>Euteleostomi</taxon>
        <taxon>Mammalia</taxon>
        <taxon>Eutheria</taxon>
        <taxon>Euarchontoglires</taxon>
        <taxon>Primates</taxon>
        <taxon>Haplorrhini</taxon>
        <taxon>Catarrhini</taxon>
        <taxon>Hominidae</taxon>
        <taxon>Homo</taxon>
    </lineage>
</organism>
<name>HV321_HUMAN</name>
<protein>
    <recommendedName>
        <fullName evidence="4 9">Immunoglobulin heavy variable 3-21</fullName>
    </recommendedName>
</protein>
<dbReference type="EMBL" id="AC245166">
    <property type="status" value="NOT_ANNOTATED_CDS"/>
    <property type="molecule type" value="Genomic_DNA"/>
</dbReference>
<dbReference type="PDB" id="6APD">
    <property type="method" value="X-ray"/>
    <property type="resolution" value="4.10 A"/>
    <property type="chains" value="J/K/N=20-117"/>
</dbReference>
<dbReference type="PDBsum" id="6APD"/>
<dbReference type="SMR" id="A0A0B4J1V1"/>
<dbReference type="FunCoup" id="A0A0B4J1V1">
    <property type="interactions" value="329"/>
</dbReference>
<dbReference type="IMGT_GENE-DB" id="IGHV3-21"/>
<dbReference type="BioMuta" id="IGHV3-21"/>
<dbReference type="jPOST" id="A0A0B4J1V1"/>
<dbReference type="MassIVE" id="A0A0B4J1V1"/>
<dbReference type="PRIDE" id="A0A0B4J1V1"/>
<dbReference type="Pumba" id="A0A0B4J1V1"/>
<dbReference type="Ensembl" id="ENST00000390607.2">
    <property type="protein sequence ID" value="ENSP00000375016.2"/>
    <property type="gene ID" value="ENSG00000211947.2"/>
</dbReference>
<dbReference type="Ensembl" id="ENST00000632980.1">
    <property type="protein sequence ID" value="ENSP00000487805.1"/>
    <property type="gene ID" value="ENSG00000282281.1"/>
</dbReference>
<dbReference type="AGR" id="HGNC:5586"/>
<dbReference type="GeneCards" id="IGHV3-21"/>
<dbReference type="HGNC" id="HGNC:5586">
    <property type="gene designation" value="IGHV3-21"/>
</dbReference>
<dbReference type="HPA" id="ENSG00000211947">
    <property type="expression patterns" value="Tissue enhanced (pancreas)"/>
</dbReference>
<dbReference type="MalaCards" id="IGHV3-21"/>
<dbReference type="neXtProt" id="NX_A0A0B4J1V1"/>
<dbReference type="OpenTargets" id="ENSG00000211947"/>
<dbReference type="Orphanet" id="67038">
    <property type="disease" value="B-cell chronic lymphocytic leukemia"/>
</dbReference>
<dbReference type="VEuPathDB" id="HostDB:ENSG00000211947"/>
<dbReference type="GeneTree" id="ENSGT01050000244871"/>
<dbReference type="HOGENOM" id="CLU_077975_5_2_1"/>
<dbReference type="InParanoid" id="A0A0B4J1V1"/>
<dbReference type="OMA" id="CYCEPRH"/>
<dbReference type="OrthoDB" id="9945861at2759"/>
<dbReference type="PAN-GO" id="A0A0B4J1V1">
    <property type="GO annotations" value="11 GO annotations based on evolutionary models"/>
</dbReference>
<dbReference type="PhylomeDB" id="A0A0B4J1V1"/>
<dbReference type="SignaLink" id="A0A0B4J1V1"/>
<dbReference type="ChiTaRS" id="IGHV3-21">
    <property type="organism name" value="human"/>
</dbReference>
<dbReference type="Pharos" id="A0A0B4J1V1">
    <property type="development level" value="Tdark"/>
</dbReference>
<dbReference type="PRO" id="PR:A0A0B4J1V1"/>
<dbReference type="Proteomes" id="UP000005640">
    <property type="component" value="Chromosome 14"/>
</dbReference>
<dbReference type="RNAct" id="A0A0B4J1V1">
    <property type="molecule type" value="protein"/>
</dbReference>
<dbReference type="Bgee" id="ENSG00000211947">
    <property type="expression patterns" value="Expressed in duodenum and 90 other cell types or tissues"/>
</dbReference>
<dbReference type="GO" id="GO:0005576">
    <property type="term" value="C:extracellular region"/>
    <property type="evidence" value="ECO:0007669"/>
    <property type="project" value="UniProtKB-SubCell"/>
</dbReference>
<dbReference type="GO" id="GO:0019814">
    <property type="term" value="C:immunoglobulin complex"/>
    <property type="evidence" value="ECO:0007669"/>
    <property type="project" value="UniProtKB-KW"/>
</dbReference>
<dbReference type="GO" id="GO:0005886">
    <property type="term" value="C:plasma membrane"/>
    <property type="evidence" value="ECO:0007669"/>
    <property type="project" value="UniProtKB-SubCell"/>
</dbReference>
<dbReference type="GO" id="GO:0003823">
    <property type="term" value="F:antigen binding"/>
    <property type="evidence" value="ECO:0000318"/>
    <property type="project" value="GO_Central"/>
</dbReference>
<dbReference type="GO" id="GO:0016064">
    <property type="term" value="P:immunoglobulin mediated immune response"/>
    <property type="evidence" value="ECO:0000318"/>
    <property type="project" value="GO_Central"/>
</dbReference>
<dbReference type="CDD" id="cd04981">
    <property type="entry name" value="IgV_H"/>
    <property type="match status" value="1"/>
</dbReference>
<dbReference type="FunFam" id="2.60.40.10:FF:000942">
    <property type="entry name" value="Immunoglobulin heavy variable 3-23"/>
    <property type="match status" value="1"/>
</dbReference>
<dbReference type="Gene3D" id="2.60.40.10">
    <property type="entry name" value="Immunoglobulins"/>
    <property type="match status" value="1"/>
</dbReference>
<dbReference type="InterPro" id="IPR007110">
    <property type="entry name" value="Ig-like_dom"/>
</dbReference>
<dbReference type="InterPro" id="IPR036179">
    <property type="entry name" value="Ig-like_dom_sf"/>
</dbReference>
<dbReference type="InterPro" id="IPR013783">
    <property type="entry name" value="Ig-like_fold"/>
</dbReference>
<dbReference type="InterPro" id="IPR013106">
    <property type="entry name" value="Ig_V-set"/>
</dbReference>
<dbReference type="InterPro" id="IPR050199">
    <property type="entry name" value="IgHV"/>
</dbReference>
<dbReference type="PANTHER" id="PTHR23266">
    <property type="entry name" value="IMMUNOGLOBULIN HEAVY CHAIN"/>
    <property type="match status" value="1"/>
</dbReference>
<dbReference type="Pfam" id="PF07686">
    <property type="entry name" value="V-set"/>
    <property type="match status" value="1"/>
</dbReference>
<dbReference type="SMART" id="SM00406">
    <property type="entry name" value="IGv"/>
    <property type="match status" value="1"/>
</dbReference>
<dbReference type="SUPFAM" id="SSF48726">
    <property type="entry name" value="Immunoglobulin"/>
    <property type="match status" value="1"/>
</dbReference>
<dbReference type="PROSITE" id="PS50835">
    <property type="entry name" value="IG_LIKE"/>
    <property type="match status" value="1"/>
</dbReference>
<comment type="function">
    <text evidence="5 6 7 8">V region of the variable domain of immunoglobulin heavy chains that participates in the antigen recognition (PubMed:24600447). Immunoglobulins, also known as antibodies, are membrane-bound or secreted glycoproteins produced by B lymphocytes. In the recognition phase of humoral immunity, the membrane-bound immunoglobulins serve as receptors which, upon binding of a specific antigen, trigger the clonal expansion and differentiation of B lymphocytes into immunoglobulins-secreting plasma cells. Secreted immunoglobulins mediate the effector phase of humoral immunity, which results in the elimination of bound antigens (PubMed:20176268, PubMed:22158414). The antigen binding site is formed by the variable domain of one heavy chain, together with that of its associated light chain. Thus, each immunoglobulin has two antigen binding sites with remarkable affinity for a particular antigen. The variable domains are assembled by a process called V-(D)-J rearrangement and can then be subjected to somatic hypermutations which, after exposure to antigen and selection, allow affinity maturation for a particular antigen (PubMed:17576170, PubMed:20176268).</text>
</comment>
<comment type="subunit">
    <text evidence="6">Immunoglobulins are composed of two identical heavy chains and two identical light chains; disulfide-linked.</text>
</comment>
<comment type="subcellular location">
    <subcellularLocation>
        <location evidence="6 7">Secreted</location>
    </subcellularLocation>
    <subcellularLocation>
        <location evidence="6 7">Cell membrane</location>
    </subcellularLocation>
</comment>
<comment type="polymorphism">
    <text evidence="10">There are several alleles. The sequence shown is that of IMGT allele IGHV3-21*01.</text>
</comment>
<comment type="caution">
    <text evidence="10">For examples of full-length immunoglobulin heavy chains (of different isotypes) see AC P0DOX2, AC P0DOX3, AC P0DOX4, AC P0DOX5 and AC P0DOX6.</text>
</comment>
<evidence type="ECO:0000250" key="1">
    <source>
        <dbReference type="UniProtKB" id="P23083"/>
    </source>
</evidence>
<evidence type="ECO:0000255" key="2"/>
<evidence type="ECO:0000255" key="3">
    <source>
        <dbReference type="PROSITE-ProRule" id="PRU00114"/>
    </source>
</evidence>
<evidence type="ECO:0000303" key="4">
    <source>
    </source>
</evidence>
<evidence type="ECO:0000303" key="5">
    <source>
    </source>
</evidence>
<evidence type="ECO:0000303" key="6">
    <source>
    </source>
</evidence>
<evidence type="ECO:0000303" key="7">
    <source>
    </source>
</evidence>
<evidence type="ECO:0000303" key="8">
    <source>
    </source>
</evidence>
<evidence type="ECO:0000303" key="9">
    <source ref="3"/>
</evidence>
<evidence type="ECO:0000305" key="10"/>
<sequence>MELGLRWVFLVAILEGVQCEVQLVESGGGLVKPGGSLRLSCAASGFTFSSYSMNWVRQAPGKGLEWVSSISSSSSYIYYADSVKGRFTISRDNAKNSLYLQMNSLRAEDTAVYYCAR</sequence>
<keyword id="KW-0002">3D-structure</keyword>
<keyword id="KW-1064">Adaptive immunity</keyword>
<keyword id="KW-1003">Cell membrane</keyword>
<keyword id="KW-1015">Disulfide bond</keyword>
<keyword id="KW-0391">Immunity</keyword>
<keyword id="KW-1280">Immunoglobulin</keyword>
<keyword id="KW-0393">Immunoglobulin domain</keyword>
<keyword id="KW-0472">Membrane</keyword>
<keyword id="KW-1267">Proteomics identification</keyword>
<keyword id="KW-1185">Reference proteome</keyword>
<keyword id="KW-0964">Secreted</keyword>
<keyword id="KW-0732">Signal</keyword>
<gene>
    <name evidence="4 9" type="primary">IGHV3-21</name>
</gene>
<accession>A0A0B4J1V1</accession>
<proteinExistence type="evidence at protein level"/>